<gene>
    <name type="primary">WRKY27</name>
    <name type="ordered locus">At5g52830</name>
    <name type="ORF">MXC20.5</name>
</gene>
<accession>Q9FLX8</accession>
<feature type="chain" id="PRO_0000133669" description="Probable WRKY transcription factor 27">
    <location>
        <begin position="1"/>
        <end position="348"/>
    </location>
</feature>
<feature type="DNA-binding region" description="WRKY" evidence="2">
    <location>
        <begin position="159"/>
        <end position="225"/>
    </location>
</feature>
<feature type="region of interest" description="Disordered" evidence="3">
    <location>
        <begin position="19"/>
        <end position="52"/>
    </location>
</feature>
<feature type="region of interest" description="Disordered" evidence="3">
    <location>
        <begin position="67"/>
        <end position="90"/>
    </location>
</feature>
<feature type="region of interest" description="Disordered" evidence="3">
    <location>
        <begin position="133"/>
        <end position="153"/>
    </location>
</feature>
<feature type="region of interest" description="Disordered" evidence="3">
    <location>
        <begin position="218"/>
        <end position="320"/>
    </location>
</feature>
<feature type="compositionally biased region" description="Pro residues" evidence="3">
    <location>
        <begin position="75"/>
        <end position="85"/>
    </location>
</feature>
<feature type="compositionally biased region" description="Low complexity" evidence="3">
    <location>
        <begin position="133"/>
        <end position="142"/>
    </location>
</feature>
<feature type="compositionally biased region" description="Basic residues" evidence="3">
    <location>
        <begin position="143"/>
        <end position="153"/>
    </location>
</feature>
<feature type="compositionally biased region" description="Polar residues" evidence="3">
    <location>
        <begin position="228"/>
        <end position="242"/>
    </location>
</feature>
<feature type="compositionally biased region" description="Acidic residues" evidence="3">
    <location>
        <begin position="274"/>
        <end position="315"/>
    </location>
</feature>
<name>WRK27_ARATH</name>
<reference key="1">
    <citation type="submission" date="2001-09" db="EMBL/GenBank/DDBJ databases">
        <title>Arabidopsis thaliana transcription factor WRKY27.</title>
        <authorList>
            <person name="Ulker B."/>
            <person name="Kushnir S."/>
            <person name="Somssich I.E."/>
        </authorList>
    </citation>
    <scope>NUCLEOTIDE SEQUENCE [MRNA]</scope>
    <source>
        <strain>cv. Columbia</strain>
        <tissue>Flower</tissue>
    </source>
</reference>
<reference key="2">
    <citation type="journal article" date="1998" name="DNA Res.">
        <title>Structural analysis of Arabidopsis thaliana chromosome 5. IV. Sequence features of the regions of 1,456,315 bp covered by nineteen physically assigned P1 and TAC clones.</title>
        <authorList>
            <person name="Sato S."/>
            <person name="Kaneko T."/>
            <person name="Kotani H."/>
            <person name="Nakamura Y."/>
            <person name="Asamizu E."/>
            <person name="Miyajima N."/>
            <person name="Tabata S."/>
        </authorList>
    </citation>
    <scope>NUCLEOTIDE SEQUENCE [LARGE SCALE GENOMIC DNA]</scope>
    <source>
        <strain>cv. Columbia</strain>
    </source>
</reference>
<reference key="3">
    <citation type="journal article" date="2017" name="Plant J.">
        <title>Araport11: a complete reannotation of the Arabidopsis thaliana reference genome.</title>
        <authorList>
            <person name="Cheng C.Y."/>
            <person name="Krishnakumar V."/>
            <person name="Chan A.P."/>
            <person name="Thibaud-Nissen F."/>
            <person name="Schobel S."/>
            <person name="Town C.D."/>
        </authorList>
    </citation>
    <scope>GENOME REANNOTATION</scope>
    <source>
        <strain>cv. Columbia</strain>
    </source>
</reference>
<sequence length="348" mass="38722">MSSEDWDLFAVVRSCSSSVSTTNSCAGHEDDIGNCKQQQDPPPPPLFQASSSCNELQDSCKPFLPVTTTTTTTWSPPPLLPPPKASSPSPNILLKQEQVLLESQDQKPPLSVRVFPPSTSSSVFVFRGQRDQLLQQQSQPPLRSRKRKNQQKRTICHVTQENLSSDLWAWRKYGQKPIKGSPYPRNYYRCSSSKGCLARKQVERSNLDPNIFIVTYTGEHTHPRPTHRNSLAGSTRNKSQPVNPVPKPDTSPLSDTVKEEIHLSPTTPLKGNDDVQETNGDEDMVGQEVNMEEEEEEEEVEEDDEEEEDDDDVDDLLIPNLAVRDRDDLFFAGSFPSWSAGSAGDGGG</sequence>
<evidence type="ECO:0000250" key="1"/>
<evidence type="ECO:0000255" key="2">
    <source>
        <dbReference type="PROSITE-ProRule" id="PRU00223"/>
    </source>
</evidence>
<evidence type="ECO:0000256" key="3">
    <source>
        <dbReference type="SAM" id="MobiDB-lite"/>
    </source>
</evidence>
<evidence type="ECO:0000305" key="4"/>
<comment type="function">
    <text evidence="1">Transcription factor. Interacts specifically with the W box (5'-(T)TGAC[CT]-3'), a frequently occurring elicitor-responsive cis-acting element (By similarity).</text>
</comment>
<comment type="subcellular location">
    <subcellularLocation>
        <location evidence="4">Nucleus</location>
    </subcellularLocation>
</comment>
<comment type="similarity">
    <text evidence="4">Belongs to the WRKY group II-e family.</text>
</comment>
<proteinExistence type="evidence at transcript level"/>
<dbReference type="EMBL" id="AF418310">
    <property type="protein sequence ID" value="AAL13041.1"/>
    <property type="molecule type" value="mRNA"/>
</dbReference>
<dbReference type="EMBL" id="AB009055">
    <property type="protein sequence ID" value="BAB10431.1"/>
    <property type="molecule type" value="Genomic_DNA"/>
</dbReference>
<dbReference type="EMBL" id="CP002688">
    <property type="protein sequence ID" value="AED96266.1"/>
    <property type="molecule type" value="Genomic_DNA"/>
</dbReference>
<dbReference type="RefSeq" id="NP_568777.1">
    <property type="nucleotide sequence ID" value="NM_124661.3"/>
</dbReference>
<dbReference type="SMR" id="Q9FLX8"/>
<dbReference type="BioGRID" id="20605">
    <property type="interactions" value="8"/>
</dbReference>
<dbReference type="IntAct" id="Q9FLX8">
    <property type="interactions" value="3"/>
</dbReference>
<dbReference type="STRING" id="3702.Q9FLX8"/>
<dbReference type="iPTMnet" id="Q9FLX8"/>
<dbReference type="PaxDb" id="3702-AT5G52830.1"/>
<dbReference type="ProteomicsDB" id="234447"/>
<dbReference type="EnsemblPlants" id="AT5G52830.1">
    <property type="protein sequence ID" value="AT5G52830.1"/>
    <property type="gene ID" value="AT5G52830"/>
</dbReference>
<dbReference type="GeneID" id="835360"/>
<dbReference type="Gramene" id="AT5G52830.1">
    <property type="protein sequence ID" value="AT5G52830.1"/>
    <property type="gene ID" value="AT5G52830"/>
</dbReference>
<dbReference type="KEGG" id="ath:AT5G52830"/>
<dbReference type="Araport" id="AT5G52830"/>
<dbReference type="TAIR" id="AT5G52830">
    <property type="gene designation" value="WRKY27"/>
</dbReference>
<dbReference type="eggNOG" id="ENOG502QW38">
    <property type="taxonomic scope" value="Eukaryota"/>
</dbReference>
<dbReference type="HOGENOM" id="CLU_029232_0_0_1"/>
<dbReference type="InParanoid" id="Q9FLX8"/>
<dbReference type="OMA" id="EGRANCK"/>
<dbReference type="PRO" id="PR:Q9FLX8"/>
<dbReference type="Proteomes" id="UP000006548">
    <property type="component" value="Chromosome 5"/>
</dbReference>
<dbReference type="ExpressionAtlas" id="Q9FLX8">
    <property type="expression patterns" value="baseline and differential"/>
</dbReference>
<dbReference type="GO" id="GO:0005634">
    <property type="term" value="C:nucleus"/>
    <property type="evidence" value="ECO:0000314"/>
    <property type="project" value="TAIR"/>
</dbReference>
<dbReference type="GO" id="GO:0003700">
    <property type="term" value="F:DNA-binding transcription factor activity"/>
    <property type="evidence" value="ECO:0000250"/>
    <property type="project" value="TAIR"/>
</dbReference>
<dbReference type="GO" id="GO:0043565">
    <property type="term" value="F:sequence-specific DNA binding"/>
    <property type="evidence" value="ECO:0007669"/>
    <property type="project" value="InterPro"/>
</dbReference>
<dbReference type="GO" id="GO:0042742">
    <property type="term" value="P:defense response to bacterium"/>
    <property type="evidence" value="ECO:0000315"/>
    <property type="project" value="TAIR"/>
</dbReference>
<dbReference type="GO" id="GO:0045892">
    <property type="term" value="P:negative regulation of DNA-templated transcription"/>
    <property type="evidence" value="ECO:0000315"/>
    <property type="project" value="TAIR"/>
</dbReference>
<dbReference type="GO" id="GO:0007263">
    <property type="term" value="P:nitric oxide mediated signal transduction"/>
    <property type="evidence" value="ECO:0000315"/>
    <property type="project" value="TAIR"/>
</dbReference>
<dbReference type="GO" id="GO:0009739">
    <property type="term" value="P:response to gibberellin"/>
    <property type="evidence" value="ECO:0000270"/>
    <property type="project" value="TAIR"/>
</dbReference>
<dbReference type="FunFam" id="2.20.25.80:FF:000007">
    <property type="entry name" value="WRKY transcription factor 22"/>
    <property type="match status" value="1"/>
</dbReference>
<dbReference type="Gene3D" id="2.20.25.80">
    <property type="entry name" value="WRKY domain"/>
    <property type="match status" value="1"/>
</dbReference>
<dbReference type="InterPro" id="IPR003657">
    <property type="entry name" value="WRKY_dom"/>
</dbReference>
<dbReference type="InterPro" id="IPR036576">
    <property type="entry name" value="WRKY_dom_sf"/>
</dbReference>
<dbReference type="InterPro" id="IPR044810">
    <property type="entry name" value="WRKY_plant"/>
</dbReference>
<dbReference type="PANTHER" id="PTHR32096:SF80">
    <property type="entry name" value="WRKY TRANSCRIPTION FACTOR 27-RELATED"/>
    <property type="match status" value="1"/>
</dbReference>
<dbReference type="PANTHER" id="PTHR32096">
    <property type="entry name" value="WRKY TRANSCRIPTION FACTOR 30-RELATED-RELATED"/>
    <property type="match status" value="1"/>
</dbReference>
<dbReference type="Pfam" id="PF03106">
    <property type="entry name" value="WRKY"/>
    <property type="match status" value="1"/>
</dbReference>
<dbReference type="SMART" id="SM00774">
    <property type="entry name" value="WRKY"/>
    <property type="match status" value="1"/>
</dbReference>
<dbReference type="SUPFAM" id="SSF118290">
    <property type="entry name" value="WRKY DNA-binding domain"/>
    <property type="match status" value="1"/>
</dbReference>
<dbReference type="PROSITE" id="PS50811">
    <property type="entry name" value="WRKY"/>
    <property type="match status" value="1"/>
</dbReference>
<protein>
    <recommendedName>
        <fullName>Probable WRKY transcription factor 27</fullName>
    </recommendedName>
    <alternativeName>
        <fullName>WRKY DNA-binding protein 27</fullName>
    </alternativeName>
</protein>
<keyword id="KW-0238">DNA-binding</keyword>
<keyword id="KW-0539">Nucleus</keyword>
<keyword id="KW-1185">Reference proteome</keyword>
<keyword id="KW-0804">Transcription</keyword>
<keyword id="KW-0805">Transcription regulation</keyword>
<organism>
    <name type="scientific">Arabidopsis thaliana</name>
    <name type="common">Mouse-ear cress</name>
    <dbReference type="NCBI Taxonomy" id="3702"/>
    <lineage>
        <taxon>Eukaryota</taxon>
        <taxon>Viridiplantae</taxon>
        <taxon>Streptophyta</taxon>
        <taxon>Embryophyta</taxon>
        <taxon>Tracheophyta</taxon>
        <taxon>Spermatophyta</taxon>
        <taxon>Magnoliopsida</taxon>
        <taxon>eudicotyledons</taxon>
        <taxon>Gunneridae</taxon>
        <taxon>Pentapetalae</taxon>
        <taxon>rosids</taxon>
        <taxon>malvids</taxon>
        <taxon>Brassicales</taxon>
        <taxon>Brassicaceae</taxon>
        <taxon>Camelineae</taxon>
        <taxon>Arabidopsis</taxon>
    </lineage>
</organism>